<dbReference type="EC" id="2.4.2.10" evidence="1"/>
<dbReference type="EMBL" id="CP001213">
    <property type="protein sequence ID" value="ACL29675.1"/>
    <property type="molecule type" value="Genomic_DNA"/>
</dbReference>
<dbReference type="RefSeq" id="WP_004217892.1">
    <property type="nucleotide sequence ID" value="NC_011835.1"/>
</dbReference>
<dbReference type="SMR" id="B8DUJ6"/>
<dbReference type="STRING" id="442563.BLA_1390"/>
<dbReference type="GeneID" id="29695700"/>
<dbReference type="KEGG" id="bla:BLA_1390"/>
<dbReference type="PATRIC" id="fig|442563.4.peg.1454"/>
<dbReference type="HOGENOM" id="CLU_074878_0_1_11"/>
<dbReference type="UniPathway" id="UPA00070">
    <property type="reaction ID" value="UER00119"/>
</dbReference>
<dbReference type="Proteomes" id="UP000002456">
    <property type="component" value="Chromosome"/>
</dbReference>
<dbReference type="GO" id="GO:0005737">
    <property type="term" value="C:cytoplasm"/>
    <property type="evidence" value="ECO:0007669"/>
    <property type="project" value="TreeGrafter"/>
</dbReference>
<dbReference type="GO" id="GO:0000287">
    <property type="term" value="F:magnesium ion binding"/>
    <property type="evidence" value="ECO:0007669"/>
    <property type="project" value="UniProtKB-UniRule"/>
</dbReference>
<dbReference type="GO" id="GO:0004588">
    <property type="term" value="F:orotate phosphoribosyltransferase activity"/>
    <property type="evidence" value="ECO:0007669"/>
    <property type="project" value="UniProtKB-UniRule"/>
</dbReference>
<dbReference type="GO" id="GO:0006207">
    <property type="term" value="P:'de novo' pyrimidine nucleobase biosynthetic process"/>
    <property type="evidence" value="ECO:0007669"/>
    <property type="project" value="TreeGrafter"/>
</dbReference>
<dbReference type="GO" id="GO:0044205">
    <property type="term" value="P:'de novo' UMP biosynthetic process"/>
    <property type="evidence" value="ECO:0007669"/>
    <property type="project" value="UniProtKB-UniRule"/>
</dbReference>
<dbReference type="GO" id="GO:0046132">
    <property type="term" value="P:pyrimidine ribonucleoside biosynthetic process"/>
    <property type="evidence" value="ECO:0007669"/>
    <property type="project" value="TreeGrafter"/>
</dbReference>
<dbReference type="CDD" id="cd06223">
    <property type="entry name" value="PRTases_typeI"/>
    <property type="match status" value="1"/>
</dbReference>
<dbReference type="Gene3D" id="3.40.50.2020">
    <property type="match status" value="1"/>
</dbReference>
<dbReference type="HAMAP" id="MF_01208">
    <property type="entry name" value="PyrE"/>
    <property type="match status" value="1"/>
</dbReference>
<dbReference type="InterPro" id="IPR023031">
    <property type="entry name" value="OPRT"/>
</dbReference>
<dbReference type="InterPro" id="IPR004467">
    <property type="entry name" value="Or_phspho_trans_dom"/>
</dbReference>
<dbReference type="InterPro" id="IPR000836">
    <property type="entry name" value="PRibTrfase_dom"/>
</dbReference>
<dbReference type="InterPro" id="IPR029057">
    <property type="entry name" value="PRTase-like"/>
</dbReference>
<dbReference type="NCBIfam" id="TIGR00336">
    <property type="entry name" value="pyrE"/>
    <property type="match status" value="1"/>
</dbReference>
<dbReference type="PANTHER" id="PTHR46683">
    <property type="entry name" value="OROTATE PHOSPHORIBOSYLTRANSFERASE 1-RELATED"/>
    <property type="match status" value="1"/>
</dbReference>
<dbReference type="PANTHER" id="PTHR46683:SF1">
    <property type="entry name" value="OROTATE PHOSPHORIBOSYLTRANSFERASE 1-RELATED"/>
    <property type="match status" value="1"/>
</dbReference>
<dbReference type="Pfam" id="PF00156">
    <property type="entry name" value="Pribosyltran"/>
    <property type="match status" value="1"/>
</dbReference>
<dbReference type="SUPFAM" id="SSF53271">
    <property type="entry name" value="PRTase-like"/>
    <property type="match status" value="1"/>
</dbReference>
<dbReference type="PROSITE" id="PS00103">
    <property type="entry name" value="PUR_PYR_PR_TRANSFER"/>
    <property type="match status" value="1"/>
</dbReference>
<gene>
    <name evidence="1" type="primary">pyrE</name>
    <name type="ordered locus">BLA_1390</name>
</gene>
<sequence length="231" mass="25110">MTEALDTRFTQFLLESQALKFGSFTLKSGRQSPYFINAGAFDDGAKIATLGEFYAEKIQQEIAASNLAARIDTVFGPAYKGIPLAVATTIAMQHRFNASIGYTFDRKEKKDHGDGGTMVGKPLEDGMNVLLVDDVMTAGTAVREVVPKLKAQADVNIVGLVLSVDRMEKTKDSDLSAVQDVQREFGFPVFAIANVKEIFAAGRQLIGEHGQPYVTDEIAKAAEEYLTQYGA</sequence>
<name>PYRE_BIFA0</name>
<organism>
    <name type="scientific">Bifidobacterium animalis subsp. lactis (strain AD011)</name>
    <dbReference type="NCBI Taxonomy" id="442563"/>
    <lineage>
        <taxon>Bacteria</taxon>
        <taxon>Bacillati</taxon>
        <taxon>Actinomycetota</taxon>
        <taxon>Actinomycetes</taxon>
        <taxon>Bifidobacteriales</taxon>
        <taxon>Bifidobacteriaceae</taxon>
        <taxon>Bifidobacterium</taxon>
    </lineage>
</organism>
<feature type="chain" id="PRO_1000164671" description="Orotate phosphoribosyltransferase">
    <location>
        <begin position="1"/>
        <end position="231"/>
    </location>
</feature>
<feature type="binding site" description="in other chain" evidence="1">
    <location>
        <position position="27"/>
    </location>
    <ligand>
        <name>5-phospho-alpha-D-ribose 1-diphosphate</name>
        <dbReference type="ChEBI" id="CHEBI:58017"/>
        <note>ligand shared between dimeric partners</note>
    </ligand>
</feature>
<feature type="binding site" description="in other chain" evidence="1">
    <location>
        <begin position="79"/>
        <end position="80"/>
    </location>
    <ligand>
        <name>5-phospho-alpha-D-ribose 1-diphosphate</name>
        <dbReference type="ChEBI" id="CHEBI:58017"/>
        <note>ligand shared between dimeric partners</note>
    </ligand>
</feature>
<feature type="binding site" evidence="1">
    <location>
        <position position="106"/>
    </location>
    <ligand>
        <name>5-phospho-alpha-D-ribose 1-diphosphate</name>
        <dbReference type="ChEBI" id="CHEBI:58017"/>
        <note>ligand shared between dimeric partners</note>
    </ligand>
</feature>
<feature type="binding site" description="in other chain" evidence="1">
    <location>
        <position position="107"/>
    </location>
    <ligand>
        <name>5-phospho-alpha-D-ribose 1-diphosphate</name>
        <dbReference type="ChEBI" id="CHEBI:58017"/>
        <note>ligand shared between dimeric partners</note>
    </ligand>
</feature>
<feature type="binding site" evidence="1">
    <location>
        <position position="110"/>
    </location>
    <ligand>
        <name>5-phospho-alpha-D-ribose 1-diphosphate</name>
        <dbReference type="ChEBI" id="CHEBI:58017"/>
        <note>ligand shared between dimeric partners</note>
    </ligand>
</feature>
<feature type="binding site" evidence="1">
    <location>
        <position position="112"/>
    </location>
    <ligand>
        <name>5-phospho-alpha-D-ribose 1-diphosphate</name>
        <dbReference type="ChEBI" id="CHEBI:58017"/>
        <note>ligand shared between dimeric partners</note>
    </ligand>
</feature>
<feature type="binding site" description="in other chain" evidence="1">
    <location>
        <begin position="133"/>
        <end position="141"/>
    </location>
    <ligand>
        <name>5-phospho-alpha-D-ribose 1-diphosphate</name>
        <dbReference type="ChEBI" id="CHEBI:58017"/>
        <note>ligand shared between dimeric partners</note>
    </ligand>
</feature>
<feature type="binding site" evidence="1">
    <location>
        <position position="137"/>
    </location>
    <ligand>
        <name>orotate</name>
        <dbReference type="ChEBI" id="CHEBI:30839"/>
    </ligand>
</feature>
<feature type="binding site" evidence="1">
    <location>
        <position position="166"/>
    </location>
    <ligand>
        <name>orotate</name>
        <dbReference type="ChEBI" id="CHEBI:30839"/>
    </ligand>
</feature>
<comment type="function">
    <text evidence="1">Catalyzes the transfer of a ribosyl phosphate group from 5-phosphoribose 1-diphosphate to orotate, leading to the formation of orotidine monophosphate (OMP).</text>
</comment>
<comment type="catalytic activity">
    <reaction evidence="1">
        <text>orotidine 5'-phosphate + diphosphate = orotate + 5-phospho-alpha-D-ribose 1-diphosphate</text>
        <dbReference type="Rhea" id="RHEA:10380"/>
        <dbReference type="ChEBI" id="CHEBI:30839"/>
        <dbReference type="ChEBI" id="CHEBI:33019"/>
        <dbReference type="ChEBI" id="CHEBI:57538"/>
        <dbReference type="ChEBI" id="CHEBI:58017"/>
        <dbReference type="EC" id="2.4.2.10"/>
    </reaction>
</comment>
<comment type="cofactor">
    <cofactor evidence="1">
        <name>Mg(2+)</name>
        <dbReference type="ChEBI" id="CHEBI:18420"/>
    </cofactor>
</comment>
<comment type="pathway">
    <text evidence="1">Pyrimidine metabolism; UMP biosynthesis via de novo pathway; UMP from orotate: step 1/2.</text>
</comment>
<comment type="subunit">
    <text evidence="1">Homodimer.</text>
</comment>
<comment type="similarity">
    <text evidence="1">Belongs to the purine/pyrimidine phosphoribosyltransferase family. PyrE subfamily.</text>
</comment>
<reference key="1">
    <citation type="journal article" date="2009" name="J. Bacteriol.">
        <title>Genome sequence of the probiotic bacterium Bifidobacterium animalis subsp. lactis AD011.</title>
        <authorList>
            <person name="Kim J.F."/>
            <person name="Jeong H."/>
            <person name="Yu D.S."/>
            <person name="Choi S.-H."/>
            <person name="Hur C.-G."/>
            <person name="Park M.-S."/>
            <person name="Yoon S.H."/>
            <person name="Kim D.-W."/>
            <person name="Ji G.E."/>
            <person name="Park H.-S."/>
            <person name="Oh T.K."/>
        </authorList>
    </citation>
    <scope>NUCLEOTIDE SEQUENCE [LARGE SCALE GENOMIC DNA]</scope>
    <source>
        <strain>AD011</strain>
    </source>
</reference>
<keyword id="KW-0328">Glycosyltransferase</keyword>
<keyword id="KW-0460">Magnesium</keyword>
<keyword id="KW-0665">Pyrimidine biosynthesis</keyword>
<keyword id="KW-1185">Reference proteome</keyword>
<keyword id="KW-0808">Transferase</keyword>
<evidence type="ECO:0000255" key="1">
    <source>
        <dbReference type="HAMAP-Rule" id="MF_01208"/>
    </source>
</evidence>
<accession>B8DUJ6</accession>
<proteinExistence type="inferred from homology"/>
<protein>
    <recommendedName>
        <fullName evidence="1">Orotate phosphoribosyltransferase</fullName>
        <shortName evidence="1">OPRT</shortName>
        <shortName evidence="1">OPRTase</shortName>
        <ecNumber evidence="1">2.4.2.10</ecNumber>
    </recommendedName>
</protein>